<accession>Q9ZW15</accession>
<accession>Q941D2</accession>
<feature type="chain" id="PRO_0000432364" description="Tropinone reductase homolog At2g29320">
    <location>
        <begin position="1"/>
        <end position="269"/>
    </location>
</feature>
<feature type="active site" description="Proton acceptor" evidence="2">
    <location>
        <position position="166"/>
    </location>
</feature>
<feature type="binding site" evidence="1">
    <location>
        <begin position="19"/>
        <end position="43"/>
    </location>
    <ligand>
        <name>NADP(+)</name>
        <dbReference type="ChEBI" id="CHEBI:58349"/>
    </ligand>
</feature>
<feature type="binding site" evidence="1">
    <location>
        <position position="152"/>
    </location>
    <ligand>
        <name>substrate</name>
    </ligand>
</feature>
<evidence type="ECO:0000250" key="1">
    <source>
        <dbReference type="UniProtKB" id="P50162"/>
    </source>
</evidence>
<evidence type="ECO:0000255" key="2">
    <source>
        <dbReference type="PROSITE-ProRule" id="PRU10001"/>
    </source>
</evidence>
<evidence type="ECO:0000305" key="3"/>
<evidence type="ECO:0000312" key="4">
    <source>
        <dbReference type="Araport" id="AT2G29320"/>
    </source>
</evidence>
<evidence type="ECO:0000312" key="5">
    <source>
        <dbReference type="EMBL" id="AAC95206.1"/>
    </source>
</evidence>
<evidence type="ECO:0000312" key="6">
    <source>
        <dbReference type="Proteomes" id="UP000006548"/>
    </source>
</evidence>
<protein>
    <recommendedName>
        <fullName evidence="3">Tropinone reductase homolog At2g29320</fullName>
        <ecNumber evidence="3">1.1.1.-</ecNumber>
    </recommendedName>
</protein>
<reference key="1">
    <citation type="journal article" date="1999" name="Nature">
        <title>Sequence and analysis of chromosome 2 of the plant Arabidopsis thaliana.</title>
        <authorList>
            <person name="Lin X."/>
            <person name="Kaul S."/>
            <person name="Rounsley S.D."/>
            <person name="Shea T.P."/>
            <person name="Benito M.-I."/>
            <person name="Town C.D."/>
            <person name="Fujii C.Y."/>
            <person name="Mason T.M."/>
            <person name="Bowman C.L."/>
            <person name="Barnstead M.E."/>
            <person name="Feldblyum T.V."/>
            <person name="Buell C.R."/>
            <person name="Ketchum K.A."/>
            <person name="Lee J.J."/>
            <person name="Ronning C.M."/>
            <person name="Koo H.L."/>
            <person name="Moffat K.S."/>
            <person name="Cronin L.A."/>
            <person name="Shen M."/>
            <person name="Pai G."/>
            <person name="Van Aken S."/>
            <person name="Umayam L."/>
            <person name="Tallon L.J."/>
            <person name="Gill J.E."/>
            <person name="Adams M.D."/>
            <person name="Carrera A.J."/>
            <person name="Creasy T.H."/>
            <person name="Goodman H.M."/>
            <person name="Somerville C.R."/>
            <person name="Copenhaver G.P."/>
            <person name="Preuss D."/>
            <person name="Nierman W.C."/>
            <person name="White O."/>
            <person name="Eisen J.A."/>
            <person name="Salzberg S.L."/>
            <person name="Fraser C.M."/>
            <person name="Venter J.C."/>
        </authorList>
    </citation>
    <scope>NUCLEOTIDE SEQUENCE [LARGE SCALE GENOMIC DNA]</scope>
    <source>
        <strain>cv. Columbia</strain>
    </source>
</reference>
<reference key="2">
    <citation type="journal article" date="2017" name="Plant J.">
        <title>Araport11: a complete reannotation of the Arabidopsis thaliana reference genome.</title>
        <authorList>
            <person name="Cheng C.Y."/>
            <person name="Krishnakumar V."/>
            <person name="Chan A.P."/>
            <person name="Thibaud-Nissen F."/>
            <person name="Schobel S."/>
            <person name="Town C.D."/>
        </authorList>
    </citation>
    <scope>GENOME REANNOTATION</scope>
    <source>
        <strain>cv. Columbia</strain>
    </source>
</reference>
<reference key="3">
    <citation type="journal article" date="2003" name="Science">
        <title>Empirical analysis of transcriptional activity in the Arabidopsis genome.</title>
        <authorList>
            <person name="Yamada K."/>
            <person name="Lim J."/>
            <person name="Dale J.M."/>
            <person name="Chen H."/>
            <person name="Shinn P."/>
            <person name="Palm C.J."/>
            <person name="Southwick A.M."/>
            <person name="Wu H.C."/>
            <person name="Kim C.J."/>
            <person name="Nguyen M."/>
            <person name="Pham P.K."/>
            <person name="Cheuk R.F."/>
            <person name="Karlin-Newmann G."/>
            <person name="Liu S.X."/>
            <person name="Lam B."/>
            <person name="Sakano H."/>
            <person name="Wu T."/>
            <person name="Yu G."/>
            <person name="Miranda M."/>
            <person name="Quach H.L."/>
            <person name="Tripp M."/>
            <person name="Chang C.H."/>
            <person name="Lee J.M."/>
            <person name="Toriumi M.J."/>
            <person name="Chan M.M."/>
            <person name="Tang C.C."/>
            <person name="Onodera C.S."/>
            <person name="Deng J.M."/>
            <person name="Akiyama K."/>
            <person name="Ansari Y."/>
            <person name="Arakawa T."/>
            <person name="Banh J."/>
            <person name="Banno F."/>
            <person name="Bowser L."/>
            <person name="Brooks S.Y."/>
            <person name="Carninci P."/>
            <person name="Chao Q."/>
            <person name="Choy N."/>
            <person name="Enju A."/>
            <person name="Goldsmith A.D."/>
            <person name="Gurjal M."/>
            <person name="Hansen N.F."/>
            <person name="Hayashizaki Y."/>
            <person name="Johnson-Hopson C."/>
            <person name="Hsuan V.W."/>
            <person name="Iida K."/>
            <person name="Karnes M."/>
            <person name="Khan S."/>
            <person name="Koesema E."/>
            <person name="Ishida J."/>
            <person name="Jiang P.X."/>
            <person name="Jones T."/>
            <person name="Kawai J."/>
            <person name="Kamiya A."/>
            <person name="Meyers C."/>
            <person name="Nakajima M."/>
            <person name="Narusaka M."/>
            <person name="Seki M."/>
            <person name="Sakurai T."/>
            <person name="Satou M."/>
            <person name="Tamse R."/>
            <person name="Vaysberg M."/>
            <person name="Wallender E.K."/>
            <person name="Wong C."/>
            <person name="Yamamura Y."/>
            <person name="Yuan S."/>
            <person name="Shinozaki K."/>
            <person name="Davis R.W."/>
            <person name="Theologis A."/>
            <person name="Ecker J.R."/>
        </authorList>
    </citation>
    <scope>NUCLEOTIDE SEQUENCE [LARGE SCALE MRNA] OF 3-269</scope>
    <source>
        <strain>cv. Columbia</strain>
    </source>
</reference>
<reference key="4">
    <citation type="journal article" date="2009" name="Chem. Biol. Interact.">
        <title>The SDR (short-chain dehydrogenase/reductase and related enzymes) nomenclature initiative.</title>
        <authorList>
            <person name="Persson B."/>
            <person name="Kallberg Y."/>
            <person name="Bray J.E."/>
            <person name="Bruford E."/>
            <person name="Dellaporta S.L."/>
            <person name="Favia A.D."/>
            <person name="Duarte R.G."/>
            <person name="Joernvall H."/>
            <person name="Kavanagh K.L."/>
            <person name="Kedishvili N."/>
            <person name="Kisiela M."/>
            <person name="Maser E."/>
            <person name="Mindnich R."/>
            <person name="Orchard S."/>
            <person name="Penning T.M."/>
            <person name="Thornton J.M."/>
            <person name="Adamski J."/>
            <person name="Oppermann U."/>
        </authorList>
    </citation>
    <scope>GENE FAMILY</scope>
    <scope>NOMENCLATURE</scope>
</reference>
<organism evidence="6">
    <name type="scientific">Arabidopsis thaliana</name>
    <name type="common">Mouse-ear cress</name>
    <dbReference type="NCBI Taxonomy" id="3702"/>
    <lineage>
        <taxon>Eukaryota</taxon>
        <taxon>Viridiplantae</taxon>
        <taxon>Streptophyta</taxon>
        <taxon>Embryophyta</taxon>
        <taxon>Tracheophyta</taxon>
        <taxon>Spermatophyta</taxon>
        <taxon>Magnoliopsida</taxon>
        <taxon>eudicotyledons</taxon>
        <taxon>Gunneridae</taxon>
        <taxon>Pentapetalae</taxon>
        <taxon>rosids</taxon>
        <taxon>malvids</taxon>
        <taxon>Brassicales</taxon>
        <taxon>Brassicaceae</taxon>
        <taxon>Camelineae</taxon>
        <taxon>Arabidopsis</taxon>
    </lineage>
</organism>
<name>TRNH9_ARATH</name>
<proteinExistence type="evidence at transcript level"/>
<gene>
    <name evidence="4" type="ordered locus">At2g29320</name>
    <name evidence="5" type="ORF">F16P2.30</name>
</gene>
<comment type="similarity">
    <text evidence="3">Belongs to the short-chain dehydrogenases/reductases (SDR) family. SDR65C subfamily.</text>
</comment>
<comment type="sequence caution" evidence="3">
    <conflict type="erroneous initiation">
        <sequence resource="EMBL-CDS" id="AAK97712"/>
    </conflict>
    <text>Truncated N-terminus.</text>
</comment>
<sequence>MVTRKMDKRLWSLQGMTALVTGAASGIGYAIVEELAGFGAKIHICDISKTLLNQSLSEWENKGFQVSGSVCDVTSHPEREKLMQTVSSIFDGKLNILVNNVGVLRGKPTTEYVADDFTFHISTNLEAAYHFCQLSHPLLKASGYGSIVFLSSVAGVVSLIDCGSIYGLTKGALNQLARNLACEWAKDGIRANAVAPNVVKTAQSQSFLEDVSKKEGLLSRTPLGRVGEPNEVSSLVVFLCLPAASYITGQTICVDGGLTVNGFSYQPHA</sequence>
<keyword id="KW-0521">NADP</keyword>
<keyword id="KW-0560">Oxidoreductase</keyword>
<keyword id="KW-1185">Reference proteome</keyword>
<dbReference type="EC" id="1.1.1.-" evidence="3"/>
<dbReference type="EMBL" id="AC004561">
    <property type="protein sequence ID" value="AAC95206.1"/>
    <property type="molecule type" value="Genomic_DNA"/>
</dbReference>
<dbReference type="EMBL" id="CP002685">
    <property type="protein sequence ID" value="AEC08234.1"/>
    <property type="molecule type" value="Genomic_DNA"/>
</dbReference>
<dbReference type="EMBL" id="AY052242">
    <property type="protein sequence ID" value="AAK97712.1"/>
    <property type="status" value="ALT_INIT"/>
    <property type="molecule type" value="mRNA"/>
</dbReference>
<dbReference type="EMBL" id="BT001027">
    <property type="protein sequence ID" value="AAN46781.1"/>
    <property type="molecule type" value="mRNA"/>
</dbReference>
<dbReference type="PIR" id="H84694">
    <property type="entry name" value="H84694"/>
</dbReference>
<dbReference type="RefSeq" id="NP_180493.1">
    <property type="nucleotide sequence ID" value="NM_128486.3"/>
</dbReference>
<dbReference type="SMR" id="Q9ZW15"/>
<dbReference type="FunCoup" id="Q9ZW15">
    <property type="interactions" value="44"/>
</dbReference>
<dbReference type="IntAct" id="Q9ZW15">
    <property type="interactions" value="4"/>
</dbReference>
<dbReference type="STRING" id="3702.Q9ZW15"/>
<dbReference type="PaxDb" id="3702-AT2G29320.1"/>
<dbReference type="ProteomicsDB" id="232381"/>
<dbReference type="EnsemblPlants" id="AT2G29320.1">
    <property type="protein sequence ID" value="AT2G29320.1"/>
    <property type="gene ID" value="AT2G29320"/>
</dbReference>
<dbReference type="GeneID" id="817481"/>
<dbReference type="Gramene" id="AT2G29320.1">
    <property type="protein sequence ID" value="AT2G29320.1"/>
    <property type="gene ID" value="AT2G29320"/>
</dbReference>
<dbReference type="KEGG" id="ath:AT2G29320"/>
<dbReference type="Araport" id="AT2G29320"/>
<dbReference type="TAIR" id="AT2G29320"/>
<dbReference type="eggNOG" id="KOG0725">
    <property type="taxonomic scope" value="Eukaryota"/>
</dbReference>
<dbReference type="HOGENOM" id="CLU_010194_1_1_1"/>
<dbReference type="InParanoid" id="Q9ZW15"/>
<dbReference type="OMA" id="KVAANEW"/>
<dbReference type="PhylomeDB" id="Q9ZW15"/>
<dbReference type="BioCyc" id="ARA:AT2G29320-MONOMER"/>
<dbReference type="PRO" id="PR:Q9ZW15"/>
<dbReference type="Proteomes" id="UP000006548">
    <property type="component" value="Chromosome 2"/>
</dbReference>
<dbReference type="ExpressionAtlas" id="Q9ZW15">
    <property type="expression patterns" value="baseline and differential"/>
</dbReference>
<dbReference type="GO" id="GO:0016491">
    <property type="term" value="F:oxidoreductase activity"/>
    <property type="evidence" value="ECO:0007669"/>
    <property type="project" value="UniProtKB-KW"/>
</dbReference>
<dbReference type="FunFam" id="3.40.50.720:FF:000084">
    <property type="entry name" value="Short-chain dehydrogenase reductase"/>
    <property type="match status" value="1"/>
</dbReference>
<dbReference type="Gene3D" id="3.40.50.720">
    <property type="entry name" value="NAD(P)-binding Rossmann-like Domain"/>
    <property type="match status" value="1"/>
</dbReference>
<dbReference type="InterPro" id="IPR036291">
    <property type="entry name" value="NAD(P)-bd_dom_sf"/>
</dbReference>
<dbReference type="InterPro" id="IPR002347">
    <property type="entry name" value="SDR_fam"/>
</dbReference>
<dbReference type="InterPro" id="IPR045000">
    <property type="entry name" value="TR"/>
</dbReference>
<dbReference type="PANTHER" id="PTHR42898:SF80">
    <property type="entry name" value="3-OXOACYL-[ACYL-CARRIER-PROTEIN] REDUCTASE"/>
    <property type="match status" value="1"/>
</dbReference>
<dbReference type="PANTHER" id="PTHR42898">
    <property type="entry name" value="TROPINONE REDUCTASE"/>
    <property type="match status" value="1"/>
</dbReference>
<dbReference type="Pfam" id="PF13561">
    <property type="entry name" value="adh_short_C2"/>
    <property type="match status" value="1"/>
</dbReference>
<dbReference type="PRINTS" id="PR00081">
    <property type="entry name" value="GDHRDH"/>
</dbReference>
<dbReference type="PRINTS" id="PR00080">
    <property type="entry name" value="SDRFAMILY"/>
</dbReference>
<dbReference type="SUPFAM" id="SSF51735">
    <property type="entry name" value="NAD(P)-binding Rossmann-fold domains"/>
    <property type="match status" value="1"/>
</dbReference>